<sequence>MRVSQMLVPTLREVPAEAEVVSHQLLLRAGFIRKTASGVYTYLPLAQRVLKKLRQIIREEIDKQGGQELLMPIIQPAEMWLESGRWHVYGPELFRLKDRHDRNFCLGPTHEEVITILIRGEVRSYKQMPLLLYQIQNKYRDERRPRFGLLRGREFIMKDLYSFDRDEAGLDISYQKMHEAYTSIFSRCGVKFRPVEADSGAIGGSSTHEFMVLAESGEAAILYCSDCDYAANVEKATTLPAAGLDPAIQQLELQEVSTPGKKTAEEVAKFLGVEPFQVIKTMFYKTDKEVVAALVRGDRDVNEIKLLNVLGALTLDLADESTVQQVTGAPTGYVGPVGLENIRIVADMEVMALVNAVVGANKQDAHLINVNPKRDFQPEIVEDIRMVKAGEPCPKCGAQLLEARGIEVGQIFKLGTKYSKALGATFLDENGKEQPIVMGCYGIGVSRTMAAAIEQNYDKDGIIWPASIAPYQAIVIPVAPKDDNQMKIAEELYKALNQAGVETILDDRSERPGVKFKDADLIGYPLRIVVGNKAVTEGVVEIRQRRSGQTDLVSVKDSVPKILEILPTL</sequence>
<protein>
    <recommendedName>
        <fullName evidence="1">Proline--tRNA ligase</fullName>
        <ecNumber evidence="1">6.1.1.15</ecNumber>
    </recommendedName>
    <alternativeName>
        <fullName evidence="1">Prolyl-tRNA synthetase</fullName>
        <shortName evidence="1">ProRS</shortName>
    </alternativeName>
</protein>
<proteinExistence type="inferred from homology"/>
<dbReference type="EC" id="6.1.1.15" evidence="1"/>
<dbReference type="EMBL" id="CP000612">
    <property type="protein sequence ID" value="ABO50485.1"/>
    <property type="molecule type" value="Genomic_DNA"/>
</dbReference>
<dbReference type="RefSeq" id="WP_011878295.1">
    <property type="nucleotide sequence ID" value="NC_009253.1"/>
</dbReference>
<dbReference type="SMR" id="A4J5Y2"/>
<dbReference type="STRING" id="349161.Dred_1967"/>
<dbReference type="KEGG" id="drm:Dred_1967"/>
<dbReference type="eggNOG" id="COG0442">
    <property type="taxonomic scope" value="Bacteria"/>
</dbReference>
<dbReference type="HOGENOM" id="CLU_016739_0_0_9"/>
<dbReference type="OrthoDB" id="9809052at2"/>
<dbReference type="Proteomes" id="UP000001556">
    <property type="component" value="Chromosome"/>
</dbReference>
<dbReference type="GO" id="GO:0005829">
    <property type="term" value="C:cytosol"/>
    <property type="evidence" value="ECO:0007669"/>
    <property type="project" value="TreeGrafter"/>
</dbReference>
<dbReference type="GO" id="GO:0002161">
    <property type="term" value="F:aminoacyl-tRNA deacylase activity"/>
    <property type="evidence" value="ECO:0007669"/>
    <property type="project" value="InterPro"/>
</dbReference>
<dbReference type="GO" id="GO:0005524">
    <property type="term" value="F:ATP binding"/>
    <property type="evidence" value="ECO:0007669"/>
    <property type="project" value="UniProtKB-UniRule"/>
</dbReference>
<dbReference type="GO" id="GO:0140096">
    <property type="term" value="F:catalytic activity, acting on a protein"/>
    <property type="evidence" value="ECO:0007669"/>
    <property type="project" value="UniProtKB-ARBA"/>
</dbReference>
<dbReference type="GO" id="GO:0004827">
    <property type="term" value="F:proline-tRNA ligase activity"/>
    <property type="evidence" value="ECO:0007669"/>
    <property type="project" value="UniProtKB-UniRule"/>
</dbReference>
<dbReference type="GO" id="GO:0016740">
    <property type="term" value="F:transferase activity"/>
    <property type="evidence" value="ECO:0007669"/>
    <property type="project" value="UniProtKB-ARBA"/>
</dbReference>
<dbReference type="GO" id="GO:0006433">
    <property type="term" value="P:prolyl-tRNA aminoacylation"/>
    <property type="evidence" value="ECO:0007669"/>
    <property type="project" value="UniProtKB-UniRule"/>
</dbReference>
<dbReference type="CDD" id="cd04334">
    <property type="entry name" value="ProRS-INS"/>
    <property type="match status" value="1"/>
</dbReference>
<dbReference type="CDD" id="cd00861">
    <property type="entry name" value="ProRS_anticodon_short"/>
    <property type="match status" value="1"/>
</dbReference>
<dbReference type="CDD" id="cd00779">
    <property type="entry name" value="ProRS_core_prok"/>
    <property type="match status" value="1"/>
</dbReference>
<dbReference type="FunFam" id="3.30.930.10:FF:000065">
    <property type="entry name" value="Proline--tRNA ligase"/>
    <property type="match status" value="1"/>
</dbReference>
<dbReference type="FunFam" id="3.30.930.10:FF:000066">
    <property type="entry name" value="Proline--tRNA ligase"/>
    <property type="match status" value="1"/>
</dbReference>
<dbReference type="FunFam" id="3.40.50.800:FF:000011">
    <property type="entry name" value="Proline--tRNA ligase"/>
    <property type="match status" value="1"/>
</dbReference>
<dbReference type="Gene3D" id="3.40.50.800">
    <property type="entry name" value="Anticodon-binding domain"/>
    <property type="match status" value="1"/>
</dbReference>
<dbReference type="Gene3D" id="3.30.930.10">
    <property type="entry name" value="Bira Bifunctional Protein, Domain 2"/>
    <property type="match status" value="2"/>
</dbReference>
<dbReference type="HAMAP" id="MF_01569">
    <property type="entry name" value="Pro_tRNA_synth_type1"/>
    <property type="match status" value="1"/>
</dbReference>
<dbReference type="InterPro" id="IPR002314">
    <property type="entry name" value="aa-tRNA-synt_IIb"/>
</dbReference>
<dbReference type="InterPro" id="IPR006195">
    <property type="entry name" value="aa-tRNA-synth_II"/>
</dbReference>
<dbReference type="InterPro" id="IPR045864">
    <property type="entry name" value="aa-tRNA-synth_II/BPL/LPL"/>
</dbReference>
<dbReference type="InterPro" id="IPR004154">
    <property type="entry name" value="Anticodon-bd"/>
</dbReference>
<dbReference type="InterPro" id="IPR036621">
    <property type="entry name" value="Anticodon-bd_dom_sf"/>
</dbReference>
<dbReference type="InterPro" id="IPR002316">
    <property type="entry name" value="Pro-tRNA-ligase_IIa"/>
</dbReference>
<dbReference type="InterPro" id="IPR004500">
    <property type="entry name" value="Pro-tRNA-synth_IIa_bac-type"/>
</dbReference>
<dbReference type="InterPro" id="IPR023717">
    <property type="entry name" value="Pro-tRNA-Synthase_IIa_type1"/>
</dbReference>
<dbReference type="InterPro" id="IPR050062">
    <property type="entry name" value="Pro-tRNA_synthetase"/>
</dbReference>
<dbReference type="InterPro" id="IPR044140">
    <property type="entry name" value="ProRS_anticodon_short"/>
</dbReference>
<dbReference type="InterPro" id="IPR033730">
    <property type="entry name" value="ProRS_core_prok"/>
</dbReference>
<dbReference type="InterPro" id="IPR036754">
    <property type="entry name" value="YbaK/aa-tRNA-synt-asso_dom_sf"/>
</dbReference>
<dbReference type="InterPro" id="IPR007214">
    <property type="entry name" value="YbaK/aa-tRNA-synth-assoc-dom"/>
</dbReference>
<dbReference type="NCBIfam" id="NF006625">
    <property type="entry name" value="PRK09194.1"/>
    <property type="match status" value="1"/>
</dbReference>
<dbReference type="NCBIfam" id="TIGR00409">
    <property type="entry name" value="proS_fam_II"/>
    <property type="match status" value="1"/>
</dbReference>
<dbReference type="PANTHER" id="PTHR42753">
    <property type="entry name" value="MITOCHONDRIAL RIBOSOME PROTEIN L39/PROLYL-TRNA LIGASE FAMILY MEMBER"/>
    <property type="match status" value="1"/>
</dbReference>
<dbReference type="PANTHER" id="PTHR42753:SF2">
    <property type="entry name" value="PROLINE--TRNA LIGASE"/>
    <property type="match status" value="1"/>
</dbReference>
<dbReference type="Pfam" id="PF03129">
    <property type="entry name" value="HGTP_anticodon"/>
    <property type="match status" value="1"/>
</dbReference>
<dbReference type="Pfam" id="PF00587">
    <property type="entry name" value="tRNA-synt_2b"/>
    <property type="match status" value="1"/>
</dbReference>
<dbReference type="Pfam" id="PF04073">
    <property type="entry name" value="tRNA_edit"/>
    <property type="match status" value="1"/>
</dbReference>
<dbReference type="PIRSF" id="PIRSF001535">
    <property type="entry name" value="ProRS_1"/>
    <property type="match status" value="1"/>
</dbReference>
<dbReference type="PRINTS" id="PR01046">
    <property type="entry name" value="TRNASYNTHPRO"/>
</dbReference>
<dbReference type="SUPFAM" id="SSF52954">
    <property type="entry name" value="Class II aaRS ABD-related"/>
    <property type="match status" value="1"/>
</dbReference>
<dbReference type="SUPFAM" id="SSF55681">
    <property type="entry name" value="Class II aaRS and biotin synthetases"/>
    <property type="match status" value="1"/>
</dbReference>
<dbReference type="SUPFAM" id="SSF55826">
    <property type="entry name" value="YbaK/ProRS associated domain"/>
    <property type="match status" value="1"/>
</dbReference>
<dbReference type="PROSITE" id="PS50862">
    <property type="entry name" value="AA_TRNA_LIGASE_II"/>
    <property type="match status" value="1"/>
</dbReference>
<gene>
    <name evidence="1" type="primary">proS</name>
    <name type="ordered locus">Dred_1967</name>
</gene>
<evidence type="ECO:0000255" key="1">
    <source>
        <dbReference type="HAMAP-Rule" id="MF_01569"/>
    </source>
</evidence>
<feature type="chain" id="PRO_1000073588" description="Proline--tRNA ligase">
    <location>
        <begin position="1"/>
        <end position="569"/>
    </location>
</feature>
<reference key="1">
    <citation type="submission" date="2007-03" db="EMBL/GenBank/DDBJ databases">
        <title>Complete sequence of Desulfotomaculum reducens MI-1.</title>
        <authorList>
            <consortium name="US DOE Joint Genome Institute"/>
            <person name="Copeland A."/>
            <person name="Lucas S."/>
            <person name="Lapidus A."/>
            <person name="Barry K."/>
            <person name="Detter J.C."/>
            <person name="Glavina del Rio T."/>
            <person name="Hammon N."/>
            <person name="Israni S."/>
            <person name="Dalin E."/>
            <person name="Tice H."/>
            <person name="Pitluck S."/>
            <person name="Sims D."/>
            <person name="Brettin T."/>
            <person name="Bruce D."/>
            <person name="Han C."/>
            <person name="Tapia R."/>
            <person name="Schmutz J."/>
            <person name="Larimer F."/>
            <person name="Land M."/>
            <person name="Hauser L."/>
            <person name="Kyrpides N."/>
            <person name="Kim E."/>
            <person name="Tebo B.M."/>
            <person name="Richardson P."/>
        </authorList>
    </citation>
    <scope>NUCLEOTIDE SEQUENCE [LARGE SCALE GENOMIC DNA]</scope>
    <source>
        <strain>ATCC BAA-1160 / DSM 100696 / MI-1</strain>
    </source>
</reference>
<name>SYP_DESRM</name>
<accession>A4J5Y2</accession>
<organism>
    <name type="scientific">Desulforamulus reducens (strain ATCC BAA-1160 / DSM 100696 / MI-1)</name>
    <name type="common">Desulfotomaculum reducens</name>
    <dbReference type="NCBI Taxonomy" id="349161"/>
    <lineage>
        <taxon>Bacteria</taxon>
        <taxon>Bacillati</taxon>
        <taxon>Bacillota</taxon>
        <taxon>Clostridia</taxon>
        <taxon>Eubacteriales</taxon>
        <taxon>Peptococcaceae</taxon>
        <taxon>Desulforamulus</taxon>
    </lineage>
</organism>
<keyword id="KW-0030">Aminoacyl-tRNA synthetase</keyword>
<keyword id="KW-0067">ATP-binding</keyword>
<keyword id="KW-0963">Cytoplasm</keyword>
<keyword id="KW-0436">Ligase</keyword>
<keyword id="KW-0547">Nucleotide-binding</keyword>
<keyword id="KW-0648">Protein biosynthesis</keyword>
<keyword id="KW-1185">Reference proteome</keyword>
<comment type="function">
    <text evidence="1">Catalyzes the attachment of proline to tRNA(Pro) in a two-step reaction: proline is first activated by ATP to form Pro-AMP and then transferred to the acceptor end of tRNA(Pro). As ProRS can inadvertently accommodate and process non-cognate amino acids such as alanine and cysteine, to avoid such errors it has two additional distinct editing activities against alanine. One activity is designated as 'pretransfer' editing and involves the tRNA(Pro)-independent hydrolysis of activated Ala-AMP. The other activity is designated 'posttransfer' editing and involves deacylation of mischarged Ala-tRNA(Pro). The misacylated Cys-tRNA(Pro) is not edited by ProRS.</text>
</comment>
<comment type="catalytic activity">
    <reaction evidence="1">
        <text>tRNA(Pro) + L-proline + ATP = L-prolyl-tRNA(Pro) + AMP + diphosphate</text>
        <dbReference type="Rhea" id="RHEA:14305"/>
        <dbReference type="Rhea" id="RHEA-COMP:9700"/>
        <dbReference type="Rhea" id="RHEA-COMP:9702"/>
        <dbReference type="ChEBI" id="CHEBI:30616"/>
        <dbReference type="ChEBI" id="CHEBI:33019"/>
        <dbReference type="ChEBI" id="CHEBI:60039"/>
        <dbReference type="ChEBI" id="CHEBI:78442"/>
        <dbReference type="ChEBI" id="CHEBI:78532"/>
        <dbReference type="ChEBI" id="CHEBI:456215"/>
        <dbReference type="EC" id="6.1.1.15"/>
    </reaction>
</comment>
<comment type="subunit">
    <text evidence="1">Homodimer.</text>
</comment>
<comment type="subcellular location">
    <subcellularLocation>
        <location evidence="1">Cytoplasm</location>
    </subcellularLocation>
</comment>
<comment type="domain">
    <text evidence="1">Consists of three domains: the N-terminal catalytic domain, the editing domain and the C-terminal anticodon-binding domain.</text>
</comment>
<comment type="similarity">
    <text evidence="1">Belongs to the class-II aminoacyl-tRNA synthetase family. ProS type 1 subfamily.</text>
</comment>